<evidence type="ECO:0000255" key="1">
    <source>
        <dbReference type="HAMAP-Rule" id="MF_00222"/>
    </source>
</evidence>
<dbReference type="EC" id="1.1.1.25" evidence="1"/>
<dbReference type="EMBL" id="CP000947">
    <property type="protein sequence ID" value="ACA31685.1"/>
    <property type="molecule type" value="Genomic_DNA"/>
</dbReference>
<dbReference type="RefSeq" id="WP_012340980.1">
    <property type="nucleotide sequence ID" value="NC_010519.1"/>
</dbReference>
<dbReference type="SMR" id="B0UWV8"/>
<dbReference type="STRING" id="228400.HSM_1897"/>
<dbReference type="GeneID" id="31488208"/>
<dbReference type="KEGG" id="hsm:HSM_1897"/>
<dbReference type="HOGENOM" id="CLU_044063_2_1_6"/>
<dbReference type="UniPathway" id="UPA00053">
    <property type="reaction ID" value="UER00087"/>
</dbReference>
<dbReference type="GO" id="GO:0005829">
    <property type="term" value="C:cytosol"/>
    <property type="evidence" value="ECO:0007669"/>
    <property type="project" value="TreeGrafter"/>
</dbReference>
<dbReference type="GO" id="GO:0050661">
    <property type="term" value="F:NADP binding"/>
    <property type="evidence" value="ECO:0007669"/>
    <property type="project" value="InterPro"/>
</dbReference>
<dbReference type="GO" id="GO:0004764">
    <property type="term" value="F:shikimate 3-dehydrogenase (NADP+) activity"/>
    <property type="evidence" value="ECO:0007669"/>
    <property type="project" value="UniProtKB-UniRule"/>
</dbReference>
<dbReference type="GO" id="GO:0008652">
    <property type="term" value="P:amino acid biosynthetic process"/>
    <property type="evidence" value="ECO:0007669"/>
    <property type="project" value="UniProtKB-KW"/>
</dbReference>
<dbReference type="GO" id="GO:0009073">
    <property type="term" value="P:aromatic amino acid family biosynthetic process"/>
    <property type="evidence" value="ECO:0007669"/>
    <property type="project" value="UniProtKB-KW"/>
</dbReference>
<dbReference type="GO" id="GO:0009423">
    <property type="term" value="P:chorismate biosynthetic process"/>
    <property type="evidence" value="ECO:0007669"/>
    <property type="project" value="UniProtKB-UniRule"/>
</dbReference>
<dbReference type="GO" id="GO:0019632">
    <property type="term" value="P:shikimate metabolic process"/>
    <property type="evidence" value="ECO:0007669"/>
    <property type="project" value="InterPro"/>
</dbReference>
<dbReference type="CDD" id="cd01065">
    <property type="entry name" value="NAD_bind_Shikimate_DH"/>
    <property type="match status" value="1"/>
</dbReference>
<dbReference type="FunFam" id="3.40.50.10860:FF:000006">
    <property type="entry name" value="Shikimate dehydrogenase (NADP(+))"/>
    <property type="match status" value="1"/>
</dbReference>
<dbReference type="Gene3D" id="3.40.50.10860">
    <property type="entry name" value="Leucine Dehydrogenase, chain A, domain 1"/>
    <property type="match status" value="1"/>
</dbReference>
<dbReference type="Gene3D" id="3.40.50.720">
    <property type="entry name" value="NAD(P)-binding Rossmann-like Domain"/>
    <property type="match status" value="1"/>
</dbReference>
<dbReference type="HAMAP" id="MF_00222">
    <property type="entry name" value="Shikimate_DH_AroE"/>
    <property type="match status" value="1"/>
</dbReference>
<dbReference type="InterPro" id="IPR046346">
    <property type="entry name" value="Aminoacid_DH-like_N_sf"/>
</dbReference>
<dbReference type="InterPro" id="IPR036291">
    <property type="entry name" value="NAD(P)-bd_dom_sf"/>
</dbReference>
<dbReference type="InterPro" id="IPR041121">
    <property type="entry name" value="SDH_C"/>
</dbReference>
<dbReference type="InterPro" id="IPR011342">
    <property type="entry name" value="Shikimate_DH"/>
</dbReference>
<dbReference type="InterPro" id="IPR013708">
    <property type="entry name" value="Shikimate_DH-bd_N"/>
</dbReference>
<dbReference type="InterPro" id="IPR022893">
    <property type="entry name" value="Shikimate_DH_fam"/>
</dbReference>
<dbReference type="InterPro" id="IPR006151">
    <property type="entry name" value="Shikm_DH/Glu-tRNA_Rdtase"/>
</dbReference>
<dbReference type="NCBIfam" id="TIGR00507">
    <property type="entry name" value="aroE"/>
    <property type="match status" value="1"/>
</dbReference>
<dbReference type="NCBIfam" id="NF001310">
    <property type="entry name" value="PRK00258.1-2"/>
    <property type="match status" value="1"/>
</dbReference>
<dbReference type="PANTHER" id="PTHR21089:SF1">
    <property type="entry name" value="BIFUNCTIONAL 3-DEHYDROQUINATE DEHYDRATASE_SHIKIMATE DEHYDROGENASE, CHLOROPLASTIC"/>
    <property type="match status" value="1"/>
</dbReference>
<dbReference type="PANTHER" id="PTHR21089">
    <property type="entry name" value="SHIKIMATE DEHYDROGENASE"/>
    <property type="match status" value="1"/>
</dbReference>
<dbReference type="Pfam" id="PF18317">
    <property type="entry name" value="SDH_C"/>
    <property type="match status" value="1"/>
</dbReference>
<dbReference type="Pfam" id="PF01488">
    <property type="entry name" value="Shikimate_DH"/>
    <property type="match status" value="1"/>
</dbReference>
<dbReference type="Pfam" id="PF08501">
    <property type="entry name" value="Shikimate_dh_N"/>
    <property type="match status" value="1"/>
</dbReference>
<dbReference type="SUPFAM" id="SSF53223">
    <property type="entry name" value="Aminoacid dehydrogenase-like, N-terminal domain"/>
    <property type="match status" value="1"/>
</dbReference>
<dbReference type="SUPFAM" id="SSF51735">
    <property type="entry name" value="NAD(P)-binding Rossmann-fold domains"/>
    <property type="match status" value="1"/>
</dbReference>
<feature type="chain" id="PRO_1000078122" description="Shikimate dehydrogenase (NADP(+))">
    <location>
        <begin position="1"/>
        <end position="271"/>
    </location>
</feature>
<feature type="active site" description="Proton acceptor" evidence="1">
    <location>
        <position position="65"/>
    </location>
</feature>
<feature type="binding site" evidence="1">
    <location>
        <begin position="14"/>
        <end position="16"/>
    </location>
    <ligand>
        <name>shikimate</name>
        <dbReference type="ChEBI" id="CHEBI:36208"/>
    </ligand>
</feature>
<feature type="binding site" evidence="1">
    <location>
        <position position="61"/>
    </location>
    <ligand>
        <name>shikimate</name>
        <dbReference type="ChEBI" id="CHEBI:36208"/>
    </ligand>
</feature>
<feature type="binding site" evidence="1">
    <location>
        <position position="86"/>
    </location>
    <ligand>
        <name>shikimate</name>
        <dbReference type="ChEBI" id="CHEBI:36208"/>
    </ligand>
</feature>
<feature type="binding site" evidence="1">
    <location>
        <position position="102"/>
    </location>
    <ligand>
        <name>shikimate</name>
        <dbReference type="ChEBI" id="CHEBI:36208"/>
    </ligand>
</feature>
<feature type="binding site" evidence="1">
    <location>
        <begin position="126"/>
        <end position="130"/>
    </location>
    <ligand>
        <name>NADP(+)</name>
        <dbReference type="ChEBI" id="CHEBI:58349"/>
    </ligand>
</feature>
<feature type="binding site" evidence="1">
    <location>
        <begin position="149"/>
        <end position="154"/>
    </location>
    <ligand>
        <name>NADP(+)</name>
        <dbReference type="ChEBI" id="CHEBI:58349"/>
    </ligand>
</feature>
<feature type="binding site" evidence="1">
    <location>
        <position position="213"/>
    </location>
    <ligand>
        <name>NADP(+)</name>
        <dbReference type="ChEBI" id="CHEBI:58349"/>
    </ligand>
</feature>
<feature type="binding site" evidence="1">
    <location>
        <position position="215"/>
    </location>
    <ligand>
        <name>shikimate</name>
        <dbReference type="ChEBI" id="CHEBI:36208"/>
    </ligand>
</feature>
<feature type="binding site" evidence="1">
    <location>
        <position position="238"/>
    </location>
    <ligand>
        <name>NADP(+)</name>
        <dbReference type="ChEBI" id="CHEBI:58349"/>
    </ligand>
</feature>
<gene>
    <name evidence="1" type="primary">aroE</name>
    <name type="ordered locus">HSM_1897</name>
</gene>
<sequence length="271" mass="30050">MDKYAVWGNPIAQSKSPQLHRYFAKQTRQNLDYVAILGDEEKFEQQLSDFFAQGAKGCNITAPFKERAFKLAQQHSKRCLSAESCNTLKKLADGTLFADNTDGAGLVSDLQRLNWLKPNQRILILGAGGATKGVLLPLLQAQQNILITNRTFSRAEDLAHKFNQFGTIEALDLKHIPIQTFDLIINATSTGLQGKTIDINPQILQLASAVYDMQYSKESDTPFIALCKKQGVTKISDGFGMLVGQAAHAFYLWRGVMPEIDPLFSGNEIKI</sequence>
<proteinExistence type="inferred from homology"/>
<organism>
    <name type="scientific">Histophilus somni (strain 2336)</name>
    <name type="common">Haemophilus somnus</name>
    <dbReference type="NCBI Taxonomy" id="228400"/>
    <lineage>
        <taxon>Bacteria</taxon>
        <taxon>Pseudomonadati</taxon>
        <taxon>Pseudomonadota</taxon>
        <taxon>Gammaproteobacteria</taxon>
        <taxon>Pasteurellales</taxon>
        <taxon>Pasteurellaceae</taxon>
        <taxon>Histophilus</taxon>
    </lineage>
</organism>
<keyword id="KW-0028">Amino-acid biosynthesis</keyword>
<keyword id="KW-0057">Aromatic amino acid biosynthesis</keyword>
<keyword id="KW-0521">NADP</keyword>
<keyword id="KW-0560">Oxidoreductase</keyword>
<accession>B0UWV8</accession>
<name>AROE_HISS2</name>
<reference key="1">
    <citation type="submission" date="2008-02" db="EMBL/GenBank/DDBJ databases">
        <title>Complete sequence of Haemophilus somnus 2336.</title>
        <authorList>
            <consortium name="US DOE Joint Genome Institute"/>
            <person name="Siddaramappa S."/>
            <person name="Duncan A.J."/>
            <person name="Challacombe J.F."/>
            <person name="Rainey D."/>
            <person name="Gillaspy A.F."/>
            <person name="Carson M."/>
            <person name="Gipson J."/>
            <person name="Gipson M."/>
            <person name="Bruce D."/>
            <person name="Detter J.C."/>
            <person name="Han C.S."/>
            <person name="Land M."/>
            <person name="Tapia R."/>
            <person name="Thompson L.S."/>
            <person name="Orvis J."/>
            <person name="Zaitshik J."/>
            <person name="Barnes G."/>
            <person name="Brettin T.S."/>
            <person name="Dyer D.W."/>
            <person name="Inzana T.J."/>
        </authorList>
    </citation>
    <scope>NUCLEOTIDE SEQUENCE [LARGE SCALE GENOMIC DNA]</scope>
    <source>
        <strain>2336</strain>
    </source>
</reference>
<comment type="function">
    <text evidence="1">Involved in the biosynthesis of the chorismate, which leads to the biosynthesis of aromatic amino acids. Catalyzes the reversible NADPH linked reduction of 3-dehydroshikimate (DHSA) to yield shikimate (SA).</text>
</comment>
<comment type="catalytic activity">
    <reaction evidence="1">
        <text>shikimate + NADP(+) = 3-dehydroshikimate + NADPH + H(+)</text>
        <dbReference type="Rhea" id="RHEA:17737"/>
        <dbReference type="ChEBI" id="CHEBI:15378"/>
        <dbReference type="ChEBI" id="CHEBI:16630"/>
        <dbReference type="ChEBI" id="CHEBI:36208"/>
        <dbReference type="ChEBI" id="CHEBI:57783"/>
        <dbReference type="ChEBI" id="CHEBI:58349"/>
        <dbReference type="EC" id="1.1.1.25"/>
    </reaction>
</comment>
<comment type="pathway">
    <text evidence="1">Metabolic intermediate biosynthesis; chorismate biosynthesis; chorismate from D-erythrose 4-phosphate and phosphoenolpyruvate: step 4/7.</text>
</comment>
<comment type="subunit">
    <text evidence="1">Homodimer.</text>
</comment>
<comment type="similarity">
    <text evidence="1">Belongs to the shikimate dehydrogenase family.</text>
</comment>
<protein>
    <recommendedName>
        <fullName evidence="1">Shikimate dehydrogenase (NADP(+))</fullName>
        <shortName evidence="1">SDH</shortName>
        <ecNumber evidence="1">1.1.1.25</ecNumber>
    </recommendedName>
</protein>